<reference key="1">
    <citation type="journal article" date="2008" name="J. Bacteriol.">
        <title>Complete genome sequence of the mosquitocidal bacterium Bacillus sphaericus C3-41 and comparison with those of closely related Bacillus species.</title>
        <authorList>
            <person name="Hu X."/>
            <person name="Fan W."/>
            <person name="Han B."/>
            <person name="Liu H."/>
            <person name="Zheng D."/>
            <person name="Li Q."/>
            <person name="Dong W."/>
            <person name="Yan J."/>
            <person name="Gao M."/>
            <person name="Berry C."/>
            <person name="Yuan Z."/>
        </authorList>
    </citation>
    <scope>NUCLEOTIDE SEQUENCE [LARGE SCALE GENOMIC DNA]</scope>
    <source>
        <strain>C3-41</strain>
    </source>
</reference>
<keyword id="KW-1005">Bacterial flagellum biogenesis</keyword>
<keyword id="KW-0143">Chaperone</keyword>
<keyword id="KW-0175">Coiled coil</keyword>
<keyword id="KW-0963">Cytoplasm</keyword>
<protein>
    <recommendedName>
        <fullName>Flagellar protein FliT</fullName>
    </recommendedName>
</protein>
<accession>B1HN64</accession>
<feature type="chain" id="PRO_0000353911" description="Flagellar protein FliT">
    <location>
        <begin position="1"/>
        <end position="119"/>
    </location>
</feature>
<feature type="coiled-coil region" evidence="2">
    <location>
        <begin position="72"/>
        <end position="99"/>
    </location>
</feature>
<organism>
    <name type="scientific">Lysinibacillus sphaericus (strain C3-41)</name>
    <dbReference type="NCBI Taxonomy" id="444177"/>
    <lineage>
        <taxon>Bacteria</taxon>
        <taxon>Bacillati</taxon>
        <taxon>Bacillota</taxon>
        <taxon>Bacilli</taxon>
        <taxon>Bacillales</taxon>
        <taxon>Bacillaceae</taxon>
        <taxon>Lysinibacillus</taxon>
    </lineage>
</organism>
<evidence type="ECO:0000250" key="1"/>
<evidence type="ECO:0000255" key="2"/>
<evidence type="ECO:0000305" key="3"/>
<dbReference type="EMBL" id="CP000817">
    <property type="protein sequence ID" value="ACA38781.1"/>
    <property type="molecule type" value="Genomic_DNA"/>
</dbReference>
<dbReference type="RefSeq" id="WP_012292913.1">
    <property type="nucleotide sequence ID" value="NC_010382.1"/>
</dbReference>
<dbReference type="SMR" id="B1HN64"/>
<dbReference type="EnsemblBacteria" id="ACA38781">
    <property type="protein sequence ID" value="ACA38781"/>
    <property type="gene ID" value="Bsph_1173"/>
</dbReference>
<dbReference type="KEGG" id="lsp:Bsph_1173"/>
<dbReference type="HOGENOM" id="CLU_165941_0_0_9"/>
<dbReference type="Proteomes" id="UP000002164">
    <property type="component" value="Chromosome"/>
</dbReference>
<dbReference type="GO" id="GO:0005829">
    <property type="term" value="C:cytosol"/>
    <property type="evidence" value="ECO:0007669"/>
    <property type="project" value="UniProtKB-SubCell"/>
</dbReference>
<dbReference type="GO" id="GO:0044781">
    <property type="term" value="P:bacterial-type flagellum organization"/>
    <property type="evidence" value="ECO:0007669"/>
    <property type="project" value="UniProtKB-KW"/>
</dbReference>
<proteinExistence type="inferred from homology"/>
<gene>
    <name type="primary">fliT</name>
    <name type="ordered locus">Bsph_1173</name>
</gene>
<comment type="function">
    <text evidence="1">May act as an export chaperone for the filament capping protein FliD.</text>
</comment>
<comment type="subunit">
    <text evidence="1">Homodimer.</text>
</comment>
<comment type="subcellular location">
    <subcellularLocation>
        <location evidence="1">Cytoplasm</location>
        <location evidence="1">Cytosol</location>
    </subcellularLocation>
</comment>
<comment type="similarity">
    <text evidence="3">Belongs to the bacillales FliT family.</text>
</comment>
<name>FLIT_LYSSC</name>
<sequence length="119" mass="14050">MYQTDQLLQVSANLFKHLGDIPNGEERDEYIETINTMLDKRETIIKGLKQEGFQFDEQNRIHRTLLELDKGIKQRLAAVMDAVKQDMANLQKTKKSEQQYFNPYSNVRVMDGMYYDKKN</sequence>